<organism>
    <name type="scientific">Escherichia coli (strain K12)</name>
    <dbReference type="NCBI Taxonomy" id="83333"/>
    <lineage>
        <taxon>Bacteria</taxon>
        <taxon>Pseudomonadati</taxon>
        <taxon>Pseudomonadota</taxon>
        <taxon>Gammaproteobacteria</taxon>
        <taxon>Enterobacterales</taxon>
        <taxon>Enterobacteriaceae</taxon>
        <taxon>Escherichia</taxon>
    </lineage>
</organism>
<gene>
    <name type="primary">insB3</name>
    <name type="ordered locus">b0274</name>
    <name type="ordered locus">JW0268</name>
</gene>
<reference key="1">
    <citation type="journal article" date="1991" name="Gene">
        <title>Four types of IS1 with differences in nucleotide sequence reside in the Escherichia coli K-12 chromosome.</title>
        <authorList>
            <person name="Umeda M."/>
            <person name="Ohtsubo E."/>
        </authorList>
    </citation>
    <scope>NUCLEOTIDE SEQUENCE [GENOMIC DNA]</scope>
    <source>
        <strain>K12 / W3110 / ATCC 27325 / DSM 5911</strain>
    </source>
</reference>
<reference key="2">
    <citation type="submission" date="1997-01" db="EMBL/GenBank/DDBJ databases">
        <title>Sequence of minutes 4-25 of Escherichia coli.</title>
        <authorList>
            <person name="Chung E."/>
            <person name="Allen E."/>
            <person name="Araujo R."/>
            <person name="Aparicio A.M."/>
            <person name="Davis K."/>
            <person name="Duncan M."/>
            <person name="Federspiel N."/>
            <person name="Hyman R."/>
            <person name="Kalman S."/>
            <person name="Komp C."/>
            <person name="Kurdi O."/>
            <person name="Lew H."/>
            <person name="Lin D."/>
            <person name="Namath A."/>
            <person name="Oefner P."/>
            <person name="Roberts D."/>
            <person name="Schramm S."/>
            <person name="Davis R.W."/>
        </authorList>
    </citation>
    <scope>NUCLEOTIDE SEQUENCE [LARGE SCALE GENOMIC DNA]</scope>
    <source>
        <strain>K12 / MG1655 / ATCC 47076</strain>
    </source>
</reference>
<reference key="3">
    <citation type="journal article" date="1997" name="Science">
        <title>The complete genome sequence of Escherichia coli K-12.</title>
        <authorList>
            <person name="Blattner F.R."/>
            <person name="Plunkett G. III"/>
            <person name="Bloch C.A."/>
            <person name="Perna N.T."/>
            <person name="Burland V."/>
            <person name="Riley M."/>
            <person name="Collado-Vides J."/>
            <person name="Glasner J.D."/>
            <person name="Rode C.K."/>
            <person name="Mayhew G.F."/>
            <person name="Gregor J."/>
            <person name="Davis N.W."/>
            <person name="Kirkpatrick H.A."/>
            <person name="Goeden M.A."/>
            <person name="Rose D.J."/>
            <person name="Mau B."/>
            <person name="Shao Y."/>
        </authorList>
    </citation>
    <scope>NUCLEOTIDE SEQUENCE [LARGE SCALE GENOMIC DNA] (B0264 AND B0274)</scope>
    <source>
        <strain>K12 / MG1655 / ATCC 47076</strain>
    </source>
</reference>
<reference key="4">
    <citation type="journal article" date="2006" name="Mol. Syst. Biol.">
        <title>Highly accurate genome sequences of Escherichia coli K-12 strains MG1655 and W3110.</title>
        <authorList>
            <person name="Hayashi K."/>
            <person name="Morooka N."/>
            <person name="Yamamoto Y."/>
            <person name="Fujita K."/>
            <person name="Isono K."/>
            <person name="Choi S."/>
            <person name="Ohtsubo E."/>
            <person name="Baba T."/>
            <person name="Wanner B.L."/>
            <person name="Mori H."/>
            <person name="Horiuchi T."/>
        </authorList>
    </citation>
    <scope>NUCLEOTIDE SEQUENCE [LARGE SCALE GENOMIC DNA]</scope>
    <source>
        <strain>K12 / W3110 / ATCC 27325 / DSM 5911</strain>
    </source>
</reference>
<name>INSB3_ECOLI</name>
<keyword id="KW-0233">DNA recombination</keyword>
<keyword id="KW-1185">Reference proteome</keyword>
<keyword id="KW-0814">Transposable element</keyword>
<keyword id="KW-0815">Transposition</keyword>
<proteinExistence type="inferred from homology"/>
<sequence>MPGNRPHYGRWPQHDFPPFKKLRPQSVTSRIQPGSDVIVCAEMDEQWGYVGAKSRQRWLFYAYDRLRKTVVAHVFGERTMATLGRLMSLLSPFDVVIWMTDGWPLYESRLKGKLHVISKRYTQRIERHNLNLRQHLARLGRKSLSFSKSVEQHDKVIGHYLNIKHYQ</sequence>
<dbReference type="EMBL" id="X52535">
    <property type="status" value="NOT_ANNOTATED_CDS"/>
    <property type="molecule type" value="Genomic_DNA"/>
</dbReference>
<dbReference type="EMBL" id="U70214">
    <property type="protein sequence ID" value="AAB08684.1"/>
    <property type="molecule type" value="Genomic_DNA"/>
</dbReference>
<dbReference type="EMBL" id="U00096">
    <property type="protein sequence ID" value="AAC73377.1"/>
    <property type="molecule type" value="Genomic_DNA"/>
</dbReference>
<dbReference type="EMBL" id="AP009048">
    <property type="protein sequence ID" value="BAE76058.1"/>
    <property type="molecule type" value="Genomic_DNA"/>
</dbReference>
<dbReference type="PIR" id="JN0137">
    <property type="entry name" value="IEECA1"/>
</dbReference>
<dbReference type="RefSeq" id="NP_414808.1">
    <property type="nucleotide sequence ID" value="NC_000913.3"/>
</dbReference>
<dbReference type="FunCoup" id="P0CF27">
    <property type="interactions" value="9"/>
</dbReference>
<dbReference type="EnsemblBacteria" id="AAC73377">
    <property type="protein sequence ID" value="AAC73377"/>
    <property type="gene ID" value="b0274"/>
</dbReference>
<dbReference type="GeneID" id="944950"/>
<dbReference type="KEGG" id="ecj:JW0268"/>
<dbReference type="KEGG" id="eco:b0264"/>
<dbReference type="KEGG" id="eco:b0274"/>
<dbReference type="KEGG" id="ecoc:C3026_01275"/>
<dbReference type="KEGG" id="ecoc:C3026_01330"/>
<dbReference type="PATRIC" id="fig|511145.12.peg.267"/>
<dbReference type="EchoBASE" id="EB4707"/>
<dbReference type="HOGENOM" id="CLU_076276_2_0_6"/>
<dbReference type="InParanoid" id="P0CF27"/>
<dbReference type="OMA" id="RTICYSK"/>
<dbReference type="PhylomeDB" id="P0CF27"/>
<dbReference type="BioCyc" id="EcoCyc:MONOMER0-4440"/>
<dbReference type="PRO" id="PR:P0CF27"/>
<dbReference type="Proteomes" id="UP000000625">
    <property type="component" value="Chromosome"/>
</dbReference>
<dbReference type="GO" id="GO:0003677">
    <property type="term" value="F:DNA binding"/>
    <property type="evidence" value="ECO:0007669"/>
    <property type="project" value="InterPro"/>
</dbReference>
<dbReference type="GO" id="GO:0004803">
    <property type="term" value="F:transposase activity"/>
    <property type="evidence" value="ECO:0007669"/>
    <property type="project" value="InterPro"/>
</dbReference>
<dbReference type="GO" id="GO:0006313">
    <property type="term" value="P:DNA transposition"/>
    <property type="evidence" value="ECO:0000318"/>
    <property type="project" value="GO_Central"/>
</dbReference>
<dbReference type="InterPro" id="IPR005063">
    <property type="entry name" value="Transposase_27"/>
</dbReference>
<dbReference type="InterPro" id="IPR051354">
    <property type="entry name" value="Transposase_27_IS1"/>
</dbReference>
<dbReference type="NCBIfam" id="NF033558">
    <property type="entry name" value="transpos_IS1"/>
    <property type="match status" value="1"/>
</dbReference>
<dbReference type="PANTHER" id="PTHR33293">
    <property type="entry name" value="INSERTION ELEMENT IS1 1 PROTEIN INSB-RELATED"/>
    <property type="match status" value="1"/>
</dbReference>
<dbReference type="PANTHER" id="PTHR33293:SF1">
    <property type="entry name" value="INSERTION ELEMENT IS1 1 PROTEIN INSB-RELATED"/>
    <property type="match status" value="1"/>
</dbReference>
<dbReference type="Pfam" id="PF03400">
    <property type="entry name" value="DDE_Tnp_IS1"/>
    <property type="match status" value="1"/>
</dbReference>
<protein>
    <recommendedName>
        <fullName>Insertion element IS1 3 protein InsB</fullName>
    </recommendedName>
    <alternativeName>
        <fullName>IS1c</fullName>
    </alternativeName>
</protein>
<comment type="function">
    <text>Absolutely required for transposition of IS1.</text>
</comment>
<comment type="similarity">
    <text evidence="1">Belongs to the transposase 27 family.</text>
</comment>
<evidence type="ECO:0000305" key="1"/>
<accession>P0CF27</accession>
<accession>Q2MCE8</accession>
<accession>Q47302</accession>
<accession>Q47691</accession>
<feature type="chain" id="PRO_0000393402" description="Insertion element IS1 3 protein InsB">
    <location>
        <begin position="1"/>
        <end position="167"/>
    </location>
</feature>